<gene>
    <name evidence="1" type="primary">obg</name>
    <name type="ordered locus">Dtpsy_0772</name>
</gene>
<feature type="chain" id="PRO_0000385894" description="GTPase Obg">
    <location>
        <begin position="1"/>
        <end position="357"/>
    </location>
</feature>
<feature type="domain" description="Obg" evidence="2">
    <location>
        <begin position="1"/>
        <end position="159"/>
    </location>
</feature>
<feature type="domain" description="OBG-type G" evidence="1">
    <location>
        <begin position="160"/>
        <end position="334"/>
    </location>
</feature>
<feature type="binding site" evidence="1">
    <location>
        <begin position="166"/>
        <end position="173"/>
    </location>
    <ligand>
        <name>GTP</name>
        <dbReference type="ChEBI" id="CHEBI:37565"/>
    </ligand>
</feature>
<feature type="binding site" evidence="1">
    <location>
        <position position="173"/>
    </location>
    <ligand>
        <name>Mg(2+)</name>
        <dbReference type="ChEBI" id="CHEBI:18420"/>
    </ligand>
</feature>
<feature type="binding site" evidence="1">
    <location>
        <begin position="191"/>
        <end position="195"/>
    </location>
    <ligand>
        <name>GTP</name>
        <dbReference type="ChEBI" id="CHEBI:37565"/>
    </ligand>
</feature>
<feature type="binding site" evidence="1">
    <location>
        <position position="193"/>
    </location>
    <ligand>
        <name>Mg(2+)</name>
        <dbReference type="ChEBI" id="CHEBI:18420"/>
    </ligand>
</feature>
<feature type="binding site" evidence="1">
    <location>
        <begin position="213"/>
        <end position="216"/>
    </location>
    <ligand>
        <name>GTP</name>
        <dbReference type="ChEBI" id="CHEBI:37565"/>
    </ligand>
</feature>
<feature type="binding site" evidence="1">
    <location>
        <begin position="284"/>
        <end position="287"/>
    </location>
    <ligand>
        <name>GTP</name>
        <dbReference type="ChEBI" id="CHEBI:37565"/>
    </ligand>
</feature>
<feature type="binding site" evidence="1">
    <location>
        <begin position="315"/>
        <end position="317"/>
    </location>
    <ligand>
        <name>GTP</name>
        <dbReference type="ChEBI" id="CHEBI:37565"/>
    </ligand>
</feature>
<comment type="function">
    <text evidence="1">An essential GTPase which binds GTP, GDP and possibly (p)ppGpp with moderate affinity, with high nucleotide exchange rates and a fairly low GTP hydrolysis rate. Plays a role in control of the cell cycle, stress response, ribosome biogenesis and in those bacteria that undergo differentiation, in morphogenesis control.</text>
</comment>
<comment type="cofactor">
    <cofactor evidence="1">
        <name>Mg(2+)</name>
        <dbReference type="ChEBI" id="CHEBI:18420"/>
    </cofactor>
</comment>
<comment type="subunit">
    <text evidence="1">Monomer.</text>
</comment>
<comment type="subcellular location">
    <subcellularLocation>
        <location evidence="1">Cytoplasm</location>
    </subcellularLocation>
</comment>
<comment type="similarity">
    <text evidence="1">Belongs to the TRAFAC class OBG-HflX-like GTPase superfamily. OBG GTPase family.</text>
</comment>
<name>OBG_ACIET</name>
<keyword id="KW-0963">Cytoplasm</keyword>
<keyword id="KW-0342">GTP-binding</keyword>
<keyword id="KW-0378">Hydrolase</keyword>
<keyword id="KW-0460">Magnesium</keyword>
<keyword id="KW-0479">Metal-binding</keyword>
<keyword id="KW-0547">Nucleotide-binding</keyword>
<keyword id="KW-1185">Reference proteome</keyword>
<dbReference type="EC" id="3.6.5.-" evidence="1"/>
<dbReference type="EMBL" id="CP001392">
    <property type="protein sequence ID" value="ACM32251.1"/>
    <property type="molecule type" value="Genomic_DNA"/>
</dbReference>
<dbReference type="SMR" id="B9MDZ7"/>
<dbReference type="KEGG" id="dia:Dtpsy_0772"/>
<dbReference type="eggNOG" id="COG0536">
    <property type="taxonomic scope" value="Bacteria"/>
</dbReference>
<dbReference type="HOGENOM" id="CLU_011747_2_0_4"/>
<dbReference type="Proteomes" id="UP000000450">
    <property type="component" value="Chromosome"/>
</dbReference>
<dbReference type="GO" id="GO:0005737">
    <property type="term" value="C:cytoplasm"/>
    <property type="evidence" value="ECO:0007669"/>
    <property type="project" value="UniProtKB-SubCell"/>
</dbReference>
<dbReference type="GO" id="GO:0005525">
    <property type="term" value="F:GTP binding"/>
    <property type="evidence" value="ECO:0007669"/>
    <property type="project" value="UniProtKB-UniRule"/>
</dbReference>
<dbReference type="GO" id="GO:0003924">
    <property type="term" value="F:GTPase activity"/>
    <property type="evidence" value="ECO:0007669"/>
    <property type="project" value="UniProtKB-UniRule"/>
</dbReference>
<dbReference type="GO" id="GO:0000287">
    <property type="term" value="F:magnesium ion binding"/>
    <property type="evidence" value="ECO:0007669"/>
    <property type="project" value="InterPro"/>
</dbReference>
<dbReference type="GO" id="GO:0042254">
    <property type="term" value="P:ribosome biogenesis"/>
    <property type="evidence" value="ECO:0007669"/>
    <property type="project" value="UniProtKB-UniRule"/>
</dbReference>
<dbReference type="CDD" id="cd01898">
    <property type="entry name" value="Obg"/>
    <property type="match status" value="1"/>
</dbReference>
<dbReference type="FunFam" id="2.70.210.12:FF:000001">
    <property type="entry name" value="GTPase Obg"/>
    <property type="match status" value="1"/>
</dbReference>
<dbReference type="Gene3D" id="2.70.210.12">
    <property type="entry name" value="GTP1/OBG domain"/>
    <property type="match status" value="1"/>
</dbReference>
<dbReference type="Gene3D" id="3.40.50.300">
    <property type="entry name" value="P-loop containing nucleotide triphosphate hydrolases"/>
    <property type="match status" value="1"/>
</dbReference>
<dbReference type="HAMAP" id="MF_01454">
    <property type="entry name" value="GTPase_Obg"/>
    <property type="match status" value="1"/>
</dbReference>
<dbReference type="InterPro" id="IPR031167">
    <property type="entry name" value="G_OBG"/>
</dbReference>
<dbReference type="InterPro" id="IPR006073">
    <property type="entry name" value="GTP-bd"/>
</dbReference>
<dbReference type="InterPro" id="IPR014100">
    <property type="entry name" value="GTP-bd_Obg/CgtA"/>
</dbReference>
<dbReference type="InterPro" id="IPR006074">
    <property type="entry name" value="GTP1-OBG_CS"/>
</dbReference>
<dbReference type="InterPro" id="IPR006169">
    <property type="entry name" value="GTP1_OBG_dom"/>
</dbReference>
<dbReference type="InterPro" id="IPR036726">
    <property type="entry name" value="GTP1_OBG_dom_sf"/>
</dbReference>
<dbReference type="InterPro" id="IPR045086">
    <property type="entry name" value="OBG_GTPase"/>
</dbReference>
<dbReference type="InterPro" id="IPR027417">
    <property type="entry name" value="P-loop_NTPase"/>
</dbReference>
<dbReference type="NCBIfam" id="TIGR02729">
    <property type="entry name" value="Obg_CgtA"/>
    <property type="match status" value="1"/>
</dbReference>
<dbReference type="NCBIfam" id="NF008954">
    <property type="entry name" value="PRK12296.1"/>
    <property type="match status" value="1"/>
</dbReference>
<dbReference type="NCBIfam" id="NF008955">
    <property type="entry name" value="PRK12297.1"/>
    <property type="match status" value="1"/>
</dbReference>
<dbReference type="NCBIfam" id="NF008956">
    <property type="entry name" value="PRK12299.1"/>
    <property type="match status" value="1"/>
</dbReference>
<dbReference type="PANTHER" id="PTHR11702">
    <property type="entry name" value="DEVELOPMENTALLY REGULATED GTP-BINDING PROTEIN-RELATED"/>
    <property type="match status" value="1"/>
</dbReference>
<dbReference type="PANTHER" id="PTHR11702:SF31">
    <property type="entry name" value="MITOCHONDRIAL RIBOSOME-ASSOCIATED GTPASE 2"/>
    <property type="match status" value="1"/>
</dbReference>
<dbReference type="Pfam" id="PF01018">
    <property type="entry name" value="GTP1_OBG"/>
    <property type="match status" value="1"/>
</dbReference>
<dbReference type="Pfam" id="PF01926">
    <property type="entry name" value="MMR_HSR1"/>
    <property type="match status" value="1"/>
</dbReference>
<dbReference type="PIRSF" id="PIRSF002401">
    <property type="entry name" value="GTP_bd_Obg/CgtA"/>
    <property type="match status" value="1"/>
</dbReference>
<dbReference type="PRINTS" id="PR00326">
    <property type="entry name" value="GTP1OBG"/>
</dbReference>
<dbReference type="SUPFAM" id="SSF82051">
    <property type="entry name" value="Obg GTP-binding protein N-terminal domain"/>
    <property type="match status" value="1"/>
</dbReference>
<dbReference type="SUPFAM" id="SSF52540">
    <property type="entry name" value="P-loop containing nucleoside triphosphate hydrolases"/>
    <property type="match status" value="1"/>
</dbReference>
<dbReference type="PROSITE" id="PS51710">
    <property type="entry name" value="G_OBG"/>
    <property type="match status" value="1"/>
</dbReference>
<dbReference type="PROSITE" id="PS00905">
    <property type="entry name" value="GTP1_OBG"/>
    <property type="match status" value="1"/>
</dbReference>
<dbReference type="PROSITE" id="PS51883">
    <property type="entry name" value="OBG"/>
    <property type="match status" value="1"/>
</dbReference>
<accession>B9MDZ7</accession>
<evidence type="ECO:0000255" key="1">
    <source>
        <dbReference type="HAMAP-Rule" id="MF_01454"/>
    </source>
</evidence>
<evidence type="ECO:0000255" key="2">
    <source>
        <dbReference type="PROSITE-ProRule" id="PRU01231"/>
    </source>
</evidence>
<sequence length="357" mass="38624">MKFVDEAFIDVAAGDGGNGCVSFRHEKYKEFGGPDGGDGGRGGHVFAVADPNLNTLVDFRYSRRHEAKRGEHGKGSDMFGAAGSDITLKMPVGTIISDADTGEVLFELLTPGEVITIAKGGDGGFGNMRFKSAINRAPRQKTPGWPGERRNLKLELKVLADVGLLGMPNAGKSTFIAAVSNARPKIADYPFTTLHPNLGVVRVGPEQSFVVADIPGLIEGASEGAGLGHQFLRHLQRTRLLLHVVDLAPFDEAVDPVAQAKAIVGELKKYDAGLYEKPRWLVLNKLDMVPSEERAARVKDFVKRFKWKGPVFEISALTREGCEPLVQSIFQHVHAQQLAQNAPAEVDPRFAGEPPRG</sequence>
<organism>
    <name type="scientific">Acidovorax ebreus (strain TPSY)</name>
    <name type="common">Diaphorobacter sp. (strain TPSY)</name>
    <dbReference type="NCBI Taxonomy" id="535289"/>
    <lineage>
        <taxon>Bacteria</taxon>
        <taxon>Pseudomonadati</taxon>
        <taxon>Pseudomonadota</taxon>
        <taxon>Betaproteobacteria</taxon>
        <taxon>Burkholderiales</taxon>
        <taxon>Comamonadaceae</taxon>
        <taxon>Diaphorobacter</taxon>
    </lineage>
</organism>
<reference key="1">
    <citation type="submission" date="2009-01" db="EMBL/GenBank/DDBJ databases">
        <title>Complete sequence of Diaphorobacter sp. TPSY.</title>
        <authorList>
            <consortium name="US DOE Joint Genome Institute"/>
            <person name="Lucas S."/>
            <person name="Copeland A."/>
            <person name="Lapidus A."/>
            <person name="Glavina del Rio T."/>
            <person name="Tice H."/>
            <person name="Bruce D."/>
            <person name="Goodwin L."/>
            <person name="Pitluck S."/>
            <person name="Chertkov O."/>
            <person name="Brettin T."/>
            <person name="Detter J.C."/>
            <person name="Han C."/>
            <person name="Larimer F."/>
            <person name="Land M."/>
            <person name="Hauser L."/>
            <person name="Kyrpides N."/>
            <person name="Mikhailova N."/>
            <person name="Coates J.D."/>
        </authorList>
    </citation>
    <scope>NUCLEOTIDE SEQUENCE [LARGE SCALE GENOMIC DNA]</scope>
    <source>
        <strain>TPSY</strain>
    </source>
</reference>
<protein>
    <recommendedName>
        <fullName evidence="1">GTPase Obg</fullName>
        <ecNumber evidence="1">3.6.5.-</ecNumber>
    </recommendedName>
    <alternativeName>
        <fullName evidence="1">GTP-binding protein Obg</fullName>
    </alternativeName>
</protein>
<proteinExistence type="inferred from homology"/>